<reference key="1">
    <citation type="journal article" date="2004" name="Cell">
        <title>RTP family members induce functional expression of mammalian odorant receptors.</title>
        <authorList>
            <person name="Saito H."/>
            <person name="Kubota M."/>
            <person name="Roberts R.W."/>
            <person name="Chi Q."/>
            <person name="Matsunami H."/>
        </authorList>
    </citation>
    <scope>NUCLEOTIDE SEQUENCE [MRNA]</scope>
    <scope>FUNCTION</scope>
    <scope>SUBCELLULAR LOCATION</scope>
    <scope>TISSUE SPECIFICITY</scope>
    <scope>INTERACTION WITH OLFACTORY RECEPTORS</scope>
</reference>
<reference key="2">
    <citation type="journal article" date="2004" name="Genome Res.">
        <title>The status, quality, and expansion of the NIH full-length cDNA project: the Mammalian Gene Collection (MGC).</title>
        <authorList>
            <consortium name="The MGC Project Team"/>
        </authorList>
    </citation>
    <scope>NUCLEOTIDE SEQUENCE [LARGE SCALE MRNA]</scope>
    <source>
        <tissue>Olfactory epithelium</tissue>
    </source>
</reference>
<comment type="function">
    <text evidence="2">Specifically promotes functional cell surface expression of olfactory receptors, but not of other GPCRs.</text>
</comment>
<comment type="subunit">
    <text evidence="2">Interacts with olfactory receptors.</text>
</comment>
<comment type="subcellular location">
    <subcellularLocation>
        <location evidence="2">Cell membrane</location>
        <topology evidence="2">Single-pass type III membrane protein</topology>
    </subcellularLocation>
    <text>Effective cell surface expression depends upon interaction with olfactory receptors.</text>
</comment>
<comment type="tissue specificity">
    <text evidence="2">Predominantly expressed in olfactory and vomeronasal organs, in mature olfactory sensory neurons.</text>
</comment>
<comment type="similarity">
    <text evidence="3">Belongs to the TMEM7 family.</text>
</comment>
<keyword id="KW-1003">Cell membrane</keyword>
<keyword id="KW-0472">Membrane</keyword>
<keyword id="KW-0479">Metal-binding</keyword>
<keyword id="KW-1185">Reference proteome</keyword>
<keyword id="KW-0812">Transmembrane</keyword>
<keyword id="KW-1133">Transmembrane helix</keyword>
<keyword id="KW-0862">Zinc</keyword>
<keyword id="KW-0863">Zinc-finger</keyword>
<proteinExistence type="evidence at protein level"/>
<sequence>MSTSLTTCEWKKVFYEKMEVAKPADSWELIIDPTLKPNELGPGWKQYLEQHASGRFHCSWCWHTWQSANVVILFHMHLDRAQRVGSVRMRVFKQLCYQCGTSRLDESSMLEENIEGLVDNLITSLREQCYDEDGGQYRIHVASRPDSGLHRSEFCEACQEGIVHWKPSEKLLEEDAAYTDASKKKGQAGFISSFFSFRWCLFWGTLCLVIVYLQFFRGRSGFL</sequence>
<feature type="chain" id="PRO_0000181992" description="Receptor-transporting protein 2">
    <location>
        <begin position="1"/>
        <end position="223"/>
    </location>
</feature>
<feature type="topological domain" description="Cytoplasmic" evidence="1">
    <location>
        <begin position="1"/>
        <end position="193"/>
    </location>
</feature>
<feature type="transmembrane region" description="Helical" evidence="1">
    <location>
        <begin position="194"/>
        <end position="216"/>
    </location>
</feature>
<feature type="topological domain" description="Extracellular" evidence="1">
    <location>
        <begin position="217"/>
        <end position="223"/>
    </location>
</feature>
<feature type="zinc finger region" description="3CxxC-type" evidence="1">
    <location>
        <begin position="52"/>
        <end position="161"/>
    </location>
</feature>
<evidence type="ECO:0000255" key="1"/>
<evidence type="ECO:0000269" key="2">
    <source>
    </source>
</evidence>
<evidence type="ECO:0000305" key="3"/>
<accession>Q80ZI2</accession>
<name>RTP2_MOUSE</name>
<dbReference type="EMBL" id="AY562226">
    <property type="protein sequence ID" value="AAT70671.1"/>
    <property type="molecule type" value="mRNA"/>
</dbReference>
<dbReference type="EMBL" id="BC049158">
    <property type="protein sequence ID" value="AAH49158.1"/>
    <property type="molecule type" value="mRNA"/>
</dbReference>
<dbReference type="CCDS" id="CCDS28081.1"/>
<dbReference type="RefSeq" id="NP_001008231.1">
    <property type="nucleotide sequence ID" value="NM_001008230.3"/>
</dbReference>
<dbReference type="FunCoup" id="Q80ZI2">
    <property type="interactions" value="114"/>
</dbReference>
<dbReference type="STRING" id="10090.ENSMUSP00000062178"/>
<dbReference type="PhosphoSitePlus" id="Q80ZI2"/>
<dbReference type="PaxDb" id="10090-ENSMUSP00000062178"/>
<dbReference type="ProteomicsDB" id="260743"/>
<dbReference type="Antibodypedia" id="19329">
    <property type="antibodies" value="84 antibodies from 16 providers"/>
</dbReference>
<dbReference type="DNASU" id="224055"/>
<dbReference type="Ensembl" id="ENSMUST00000061030.10">
    <property type="protein sequence ID" value="ENSMUSP00000062178.9"/>
    <property type="gene ID" value="ENSMUSG00000047531.10"/>
</dbReference>
<dbReference type="GeneID" id="224055"/>
<dbReference type="KEGG" id="mmu:224055"/>
<dbReference type="UCSC" id="uc007yty.1">
    <property type="organism name" value="mouse"/>
</dbReference>
<dbReference type="AGR" id="MGI:2685451"/>
<dbReference type="CTD" id="344892"/>
<dbReference type="MGI" id="MGI:2685451">
    <property type="gene designation" value="Rtp2"/>
</dbReference>
<dbReference type="VEuPathDB" id="HostDB:ENSMUSG00000047531"/>
<dbReference type="eggNOG" id="ENOG502S1UZ">
    <property type="taxonomic scope" value="Eukaryota"/>
</dbReference>
<dbReference type="GeneTree" id="ENSGT00940000162172"/>
<dbReference type="HOGENOM" id="CLU_092465_0_0_1"/>
<dbReference type="InParanoid" id="Q80ZI2"/>
<dbReference type="OMA" id="DSWELIM"/>
<dbReference type="OrthoDB" id="5854at9989"/>
<dbReference type="PhylomeDB" id="Q80ZI2"/>
<dbReference type="TreeFam" id="TF333246"/>
<dbReference type="BioGRID-ORCS" id="224055">
    <property type="hits" value="6 hits in 78 CRISPR screens"/>
</dbReference>
<dbReference type="PRO" id="PR:Q80ZI2"/>
<dbReference type="Proteomes" id="UP000000589">
    <property type="component" value="Chromosome 16"/>
</dbReference>
<dbReference type="RNAct" id="Q80ZI2">
    <property type="molecule type" value="protein"/>
</dbReference>
<dbReference type="Bgee" id="ENSMUSG00000047531">
    <property type="expression patterns" value="Expressed in respiratory tract epithelium and 6 other cell types or tissues"/>
</dbReference>
<dbReference type="ExpressionAtlas" id="Q80ZI2">
    <property type="expression patterns" value="baseline and differential"/>
</dbReference>
<dbReference type="GO" id="GO:0009986">
    <property type="term" value="C:cell surface"/>
    <property type="evidence" value="ECO:0007669"/>
    <property type="project" value="Ensembl"/>
</dbReference>
<dbReference type="GO" id="GO:0005789">
    <property type="term" value="C:endoplasmic reticulum membrane"/>
    <property type="evidence" value="ECO:0000304"/>
    <property type="project" value="Reactome"/>
</dbReference>
<dbReference type="GO" id="GO:0005886">
    <property type="term" value="C:plasma membrane"/>
    <property type="evidence" value="ECO:0000304"/>
    <property type="project" value="Reactome"/>
</dbReference>
<dbReference type="GO" id="GO:0031849">
    <property type="term" value="F:olfactory receptor binding"/>
    <property type="evidence" value="ECO:0007669"/>
    <property type="project" value="Ensembl"/>
</dbReference>
<dbReference type="GO" id="GO:0008270">
    <property type="term" value="F:zinc ion binding"/>
    <property type="evidence" value="ECO:0007669"/>
    <property type="project" value="UniProtKB-KW"/>
</dbReference>
<dbReference type="GO" id="GO:0051205">
    <property type="term" value="P:protein insertion into membrane"/>
    <property type="evidence" value="ECO:0007669"/>
    <property type="project" value="Ensembl"/>
</dbReference>
<dbReference type="InterPro" id="IPR026096">
    <property type="entry name" value="R-trans_p"/>
</dbReference>
<dbReference type="InterPro" id="IPR027377">
    <property type="entry name" value="ZAR1/RTP1-5-like_Znf-3CxxC"/>
</dbReference>
<dbReference type="PANTHER" id="PTHR14402">
    <property type="entry name" value="RECEPTOR TRANSPORTING PROTEIN"/>
    <property type="match status" value="1"/>
</dbReference>
<dbReference type="PANTHER" id="PTHR14402:SF18">
    <property type="entry name" value="RECEPTOR-TRANSPORTING PROTEIN 2"/>
    <property type="match status" value="1"/>
</dbReference>
<dbReference type="Pfam" id="PF13695">
    <property type="entry name" value="Zn_ribbon_3CxxC"/>
    <property type="match status" value="1"/>
</dbReference>
<dbReference type="SMART" id="SM01328">
    <property type="entry name" value="zf-3CxxC"/>
    <property type="match status" value="1"/>
</dbReference>
<organism>
    <name type="scientific">Mus musculus</name>
    <name type="common">Mouse</name>
    <dbReference type="NCBI Taxonomy" id="10090"/>
    <lineage>
        <taxon>Eukaryota</taxon>
        <taxon>Metazoa</taxon>
        <taxon>Chordata</taxon>
        <taxon>Craniata</taxon>
        <taxon>Vertebrata</taxon>
        <taxon>Euteleostomi</taxon>
        <taxon>Mammalia</taxon>
        <taxon>Eutheria</taxon>
        <taxon>Euarchontoglires</taxon>
        <taxon>Glires</taxon>
        <taxon>Rodentia</taxon>
        <taxon>Myomorpha</taxon>
        <taxon>Muroidea</taxon>
        <taxon>Muridae</taxon>
        <taxon>Murinae</taxon>
        <taxon>Mus</taxon>
        <taxon>Mus</taxon>
    </lineage>
</organism>
<protein>
    <recommendedName>
        <fullName>Receptor-transporting protein 2</fullName>
    </recommendedName>
</protein>
<gene>
    <name type="primary">Rtp2</name>
    <name type="synonym">Gm605</name>
</gene>